<comment type="subcellular location">
    <subcellularLocation>
        <location evidence="4">Secreted</location>
    </subcellularLocation>
</comment>
<comment type="tissue specificity">
    <text evidence="4">Expressed by the venom duct.</text>
</comment>
<comment type="domain">
    <text evidence="3">The cysteine framework is III (CC-C-C-CC). Classified in the M-2 branch, since 2 residues stand between the fourth and the fifth cysteine residues.</text>
</comment>
<comment type="similarity">
    <text evidence="3">Belongs to the conotoxin M superfamily.</text>
</comment>
<reference key="1">
    <citation type="journal article" date="2017" name="FEBS J.">
        <title>Structural plasticity of Mini-M conotoxins: expression of all mini-M subtypes by Conus regius.</title>
        <authorList>
            <person name="Franco A."/>
            <person name="Dovell S."/>
            <person name="Moller C."/>
            <person name="Grandal M."/>
            <person name="Clark E."/>
            <person name="Mari F."/>
        </authorList>
    </citation>
    <scope>NUCLEOTIDE SEQUENCE [MRNA]</scope>
    <source>
        <tissue>Venom duct</tissue>
    </source>
</reference>
<name>CM317_CONRE</name>
<keyword id="KW-1015">Disulfide bond</keyword>
<keyword id="KW-0964">Secreted</keyword>
<keyword id="KW-0732">Signal</keyword>
<keyword id="KW-0800">Toxin</keyword>
<sequence>TICLLLFPLTVVPLDGDQPAHQPAVRKHNIKSAVQLRQWDEEQQCCTGQCHICWPCC</sequence>
<protein>
    <recommendedName>
        <fullName evidence="2">Conotoxin reg3.17</fullName>
        <shortName evidence="5">Rg3.17</shortName>
    </recommendedName>
</protein>
<feature type="signal peptide" evidence="3">
    <location>
        <begin position="1" status="less than"/>
        <end position="16"/>
    </location>
</feature>
<feature type="propeptide" id="PRO_0000444787" evidence="4">
    <location>
        <begin position="17"/>
        <end position="44"/>
    </location>
</feature>
<feature type="peptide" id="PRO_5014399718" description="Conotoxin reg3.17" evidence="4">
    <location>
        <begin position="45"/>
        <end position="57"/>
    </location>
</feature>
<feature type="disulfide bond" evidence="1">
    <location>
        <begin position="45"/>
        <end position="57"/>
    </location>
</feature>
<feature type="disulfide bond" evidence="1">
    <location>
        <begin position="46"/>
        <end position="53"/>
    </location>
</feature>
<feature type="disulfide bond" evidence="1">
    <location>
        <begin position="50"/>
        <end position="56"/>
    </location>
</feature>
<feature type="non-terminal residue" evidence="5">
    <location>
        <position position="1"/>
    </location>
</feature>
<organism>
    <name type="scientific">Conus regius</name>
    <name type="common">Crown cone</name>
    <dbReference type="NCBI Taxonomy" id="101314"/>
    <lineage>
        <taxon>Eukaryota</taxon>
        <taxon>Metazoa</taxon>
        <taxon>Spiralia</taxon>
        <taxon>Lophotrochozoa</taxon>
        <taxon>Mollusca</taxon>
        <taxon>Gastropoda</taxon>
        <taxon>Caenogastropoda</taxon>
        <taxon>Neogastropoda</taxon>
        <taxon>Conoidea</taxon>
        <taxon>Conidae</taxon>
        <taxon>Conus</taxon>
        <taxon>Stephanoconus</taxon>
    </lineage>
</organism>
<accession>A0A2I6EDN0</accession>
<dbReference type="EMBL" id="MF588951">
    <property type="protein sequence ID" value="AUJ88075.1"/>
    <property type="molecule type" value="mRNA"/>
</dbReference>
<dbReference type="GO" id="GO:0005576">
    <property type="term" value="C:extracellular region"/>
    <property type="evidence" value="ECO:0007669"/>
    <property type="project" value="UniProtKB-SubCell"/>
</dbReference>
<dbReference type="GO" id="GO:0008200">
    <property type="term" value="F:ion channel inhibitor activity"/>
    <property type="evidence" value="ECO:0007669"/>
    <property type="project" value="InterPro"/>
</dbReference>
<dbReference type="GO" id="GO:0090729">
    <property type="term" value="F:toxin activity"/>
    <property type="evidence" value="ECO:0007669"/>
    <property type="project" value="UniProtKB-KW"/>
</dbReference>
<dbReference type="InterPro" id="IPR004214">
    <property type="entry name" value="Conotoxin"/>
</dbReference>
<dbReference type="Pfam" id="PF02950">
    <property type="entry name" value="Conotoxin"/>
    <property type="match status" value="1"/>
</dbReference>
<proteinExistence type="evidence at transcript level"/>
<evidence type="ECO:0000250" key="1">
    <source>
        <dbReference type="UniProtKB" id="P85021"/>
    </source>
</evidence>
<evidence type="ECO:0000303" key="2">
    <source>
    </source>
</evidence>
<evidence type="ECO:0000305" key="3"/>
<evidence type="ECO:0000305" key="4">
    <source>
    </source>
</evidence>
<evidence type="ECO:0000312" key="5">
    <source>
        <dbReference type="EMBL" id="AUJ88075.1"/>
    </source>
</evidence>